<protein>
    <recommendedName>
        <fullName>Fe-S cluster assembly protein DRE2</fullName>
    </recommendedName>
    <alternativeName>
        <fullName>Anamorsin homolog</fullName>
    </alternativeName>
</protein>
<keyword id="KW-0004">4Fe-4S</keyword>
<keyword id="KW-0963">Cytoplasm</keyword>
<keyword id="KW-0408">Iron</keyword>
<keyword id="KW-0411">Iron-sulfur</keyword>
<keyword id="KW-0479">Metal-binding</keyword>
<keyword id="KW-0496">Mitochondrion</keyword>
<keyword id="KW-1185">Reference proteome</keyword>
<feature type="chain" id="PRO_0000392388" description="Fe-S cluster assembly protein DRE2">
    <location>
        <begin position="1"/>
        <end position="112"/>
    </location>
</feature>
<feature type="region of interest" description="Disordered" evidence="1">
    <location>
        <begin position="8"/>
        <end position="112"/>
    </location>
</feature>
<feature type="region of interest" description="Fe-S binding site B" evidence="1">
    <location>
        <begin position="69"/>
        <end position="83"/>
    </location>
</feature>
<feature type="short sequence motif" description="Cx2C motif 1" evidence="1">
    <location>
        <begin position="69"/>
        <end position="72"/>
    </location>
</feature>
<feature type="short sequence motif" description="Cx2C motif 2" evidence="1">
    <location>
        <begin position="80"/>
        <end position="83"/>
    </location>
</feature>
<feature type="binding site" evidence="1">
    <location>
        <position position="69"/>
    </location>
    <ligand>
        <name>[4Fe-4S] cluster</name>
        <dbReference type="ChEBI" id="CHEBI:49883"/>
    </ligand>
</feature>
<feature type="binding site" evidence="1">
    <location>
        <position position="72"/>
    </location>
    <ligand>
        <name>[4Fe-4S] cluster</name>
        <dbReference type="ChEBI" id="CHEBI:49883"/>
    </ligand>
</feature>
<feature type="binding site" evidence="1">
    <location>
        <position position="80"/>
    </location>
    <ligand>
        <name>[4Fe-4S] cluster</name>
        <dbReference type="ChEBI" id="CHEBI:49883"/>
    </ligand>
</feature>
<feature type="binding site" evidence="1">
    <location>
        <position position="83"/>
    </location>
    <ligand>
        <name>[4Fe-4S] cluster</name>
        <dbReference type="ChEBI" id="CHEBI:49883"/>
    </ligand>
</feature>
<organism>
    <name type="scientific">Encephalitozoon cuniculi (strain GB-M1)</name>
    <name type="common">Microsporidian parasite</name>
    <dbReference type="NCBI Taxonomy" id="284813"/>
    <lineage>
        <taxon>Eukaryota</taxon>
        <taxon>Fungi</taxon>
        <taxon>Fungi incertae sedis</taxon>
        <taxon>Microsporidia</taxon>
        <taxon>Unikaryonidae</taxon>
        <taxon>Encephalitozoon</taxon>
    </lineage>
</organism>
<sequence>MEDKEELRKLLRSMMRKSTDPRTKMQDEYLTDEDKAIQRSERPPAKKRACKDCTCGLKEEQEVRTRSACGNCYKGDAFRCSGCPSLGLPPYEPGDVVSFSMDLSNEFQGEDA</sequence>
<reference key="1">
    <citation type="journal article" date="2001" name="Nature">
        <title>Genome sequence and gene compaction of the eukaryote parasite Encephalitozoon cuniculi.</title>
        <authorList>
            <person name="Katinka M.D."/>
            <person name="Duprat S."/>
            <person name="Cornillot E."/>
            <person name="Metenier G."/>
            <person name="Thomarat F."/>
            <person name="Prensier G."/>
            <person name="Barbe V."/>
            <person name="Peyretaillade E."/>
            <person name="Brottier P."/>
            <person name="Wincker P."/>
            <person name="Delbac F."/>
            <person name="El Alaoui H."/>
            <person name="Peyret P."/>
            <person name="Saurin W."/>
            <person name="Gouy M."/>
            <person name="Weissenbach J."/>
            <person name="Vivares C.P."/>
        </authorList>
    </citation>
    <scope>NUCLEOTIDE SEQUENCE [LARGE SCALE GENOMIC DNA]</scope>
    <source>
        <strain>GB-M1</strain>
    </source>
</reference>
<gene>
    <name type="primary">DRE2</name>
    <name type="ordered locus">ECU02_0490</name>
</gene>
<dbReference type="EMBL" id="AL590442">
    <property type="protein sequence ID" value="CAD25080.1"/>
    <property type="molecule type" value="Genomic_DNA"/>
</dbReference>
<dbReference type="RefSeq" id="NP_584576.1">
    <property type="nucleotide sequence ID" value="NM_001040765.1"/>
</dbReference>
<dbReference type="SMR" id="Q8SWE5"/>
<dbReference type="STRING" id="284813.Q8SWE5"/>
<dbReference type="GeneID" id="858566"/>
<dbReference type="KEGG" id="ecu:ECU02_0490"/>
<dbReference type="VEuPathDB" id="MicrosporidiaDB:ECU02_0490"/>
<dbReference type="HOGENOM" id="CLU_121509_2_0_1"/>
<dbReference type="InParanoid" id="Q8SWE5"/>
<dbReference type="OMA" id="TMPPGGC"/>
<dbReference type="OrthoDB" id="311633at2759"/>
<dbReference type="Proteomes" id="UP000000819">
    <property type="component" value="Chromosome II"/>
</dbReference>
<dbReference type="GO" id="GO:0005758">
    <property type="term" value="C:mitochondrial intermembrane space"/>
    <property type="evidence" value="ECO:0007669"/>
    <property type="project" value="UniProtKB-SubCell"/>
</dbReference>
<dbReference type="GO" id="GO:0051539">
    <property type="term" value="F:4 iron, 4 sulfur cluster binding"/>
    <property type="evidence" value="ECO:0007669"/>
    <property type="project" value="UniProtKB-KW"/>
</dbReference>
<dbReference type="GO" id="GO:0046872">
    <property type="term" value="F:metal ion binding"/>
    <property type="evidence" value="ECO:0007669"/>
    <property type="project" value="UniProtKB-KW"/>
</dbReference>
<dbReference type="GO" id="GO:0016226">
    <property type="term" value="P:iron-sulfur cluster assembly"/>
    <property type="evidence" value="ECO:0007669"/>
    <property type="project" value="InterPro"/>
</dbReference>
<dbReference type="InterPro" id="IPR007785">
    <property type="entry name" value="Anamorsin"/>
</dbReference>
<dbReference type="InterPro" id="IPR046408">
    <property type="entry name" value="CIAPIN1"/>
</dbReference>
<dbReference type="PANTHER" id="PTHR13273">
    <property type="entry name" value="ANAMORSIN"/>
    <property type="match status" value="1"/>
</dbReference>
<dbReference type="PANTHER" id="PTHR13273:SF14">
    <property type="entry name" value="ANAMORSIN"/>
    <property type="match status" value="1"/>
</dbReference>
<dbReference type="Pfam" id="PF05093">
    <property type="entry name" value="CIAPIN1"/>
    <property type="match status" value="2"/>
</dbReference>
<accession>Q8SWE5</accession>
<comment type="function">
    <text evidence="1">Component of the cytosolic iron-sulfur (Fe-S) protein assembly (CIA) machinery required for the maturation of extramitochondrial Fe-S proteins. Part of an electron transfer chain functioning in an early step of cytosolic Fe-S biogenesis, facilitating the de novo assembly of a [4Fe-4S] cluster on the scaffold complex CFD1-NBP35. Electrons are transferred to DRE2 from NADPH via the FAD- and FMN-containing protein TAH18. TAH18-DRE2 are also required for the assembly of the diferric tyrosyl radical cofactor of ribonucleotide reductase (RNR), probably by providing electrons for reduction during radical cofactor maturation in the catalytic small subunit RNR2.</text>
</comment>
<comment type="cofactor">
    <cofactor evidence="1">
        <name>[4Fe-4S] cluster</name>
        <dbReference type="ChEBI" id="CHEBI:49883"/>
    </cofactor>
</comment>
<comment type="subunit">
    <text evidence="1">Monomer. Interacts with TAH18. Interacts with MIA40.</text>
</comment>
<comment type="subcellular location">
    <subcellularLocation>
        <location evidence="1">Cytoplasm</location>
    </subcellularLocation>
    <subcellularLocation>
        <location evidence="1">Mitochondrion intermembrane space</location>
    </subcellularLocation>
</comment>
<comment type="domain">
    <text evidence="1">The C-terminal domain binds 1 Fe-S cluster but is otherwise mostly in an intrinsically disordered conformation.</text>
</comment>
<comment type="domain">
    <text evidence="1">The twin Cx2C motifs are involved in the recognition by the mitochondrial MIA40-ERV1 disulfide relay system. The formation of 2 disulfide bonds in the Cx2C motifs through dithiol/disulfide exchange reactions effectively traps the protein in the mitochondrial intermembrane space.</text>
</comment>
<comment type="similarity">
    <text evidence="2">Belongs to the anamorsin family.</text>
</comment>
<evidence type="ECO:0000250" key="1">
    <source>
        <dbReference type="UniProtKB" id="P36152"/>
    </source>
</evidence>
<evidence type="ECO:0000305" key="2"/>
<name>DRE2_ENCCU</name>
<proteinExistence type="inferred from homology"/>